<proteinExistence type="evidence at protein level"/>
<gene>
    <name evidence="3" type="primary">cruF</name>
    <name evidence="3" type="synonym">c0505</name>
    <name evidence="6" type="ORF">C444_12927</name>
</gene>
<organism>
    <name type="scientific">Haloarcula japonica (strain ATCC 49778 / DSM 6131 / JCM 7785 / NBRC 101032 / NCIMB 13157 / TR-1)</name>
    <dbReference type="NCBI Taxonomy" id="1227453"/>
    <lineage>
        <taxon>Archaea</taxon>
        <taxon>Methanobacteriati</taxon>
        <taxon>Methanobacteriota</taxon>
        <taxon>Stenosarchaea group</taxon>
        <taxon>Halobacteria</taxon>
        <taxon>Halobacteriales</taxon>
        <taxon>Haloarculaceae</taxon>
        <taxon>Haloarcula</taxon>
    </lineage>
</organism>
<accession>A0A0A1GNF2</accession>
<accession>M0L9D2</accession>
<dbReference type="EC" id="4.2.1.161" evidence="2"/>
<dbReference type="EMBL" id="LC008544">
    <property type="protein sequence ID" value="BAP82511.1"/>
    <property type="molecule type" value="Genomic_DNA"/>
</dbReference>
<dbReference type="EMBL" id="AOLY01000037">
    <property type="protein sequence ID" value="EMA29703.1"/>
    <property type="molecule type" value="Genomic_DNA"/>
</dbReference>
<dbReference type="RefSeq" id="WP_004593286.1">
    <property type="nucleotide sequence ID" value="NZ_AOLY01000037.1"/>
</dbReference>
<dbReference type="STRING" id="1227453.C444_12927"/>
<dbReference type="KEGG" id="ag:BAP82511"/>
<dbReference type="PATRIC" id="fig|1227453.3.peg.2545"/>
<dbReference type="eggNOG" id="arCOG02835">
    <property type="taxonomic scope" value="Archaea"/>
</dbReference>
<dbReference type="OrthoDB" id="107798at2157"/>
<dbReference type="BioCyc" id="MetaCyc:MONOMER-20364"/>
<dbReference type="BRENDA" id="4.2.1.161">
    <property type="organism ID" value="13658"/>
</dbReference>
<dbReference type="Proteomes" id="UP000011524">
    <property type="component" value="Unassembled WGS sequence"/>
</dbReference>
<dbReference type="GO" id="GO:0016020">
    <property type="term" value="C:membrane"/>
    <property type="evidence" value="ECO:0007669"/>
    <property type="project" value="UniProtKB-SubCell"/>
</dbReference>
<dbReference type="GO" id="GO:0016836">
    <property type="term" value="F:hydro-lyase activity"/>
    <property type="evidence" value="ECO:0000314"/>
    <property type="project" value="UniProtKB"/>
</dbReference>
<dbReference type="GO" id="GO:0016117">
    <property type="term" value="P:carotenoid biosynthetic process"/>
    <property type="evidence" value="ECO:0000315"/>
    <property type="project" value="UniProtKB"/>
</dbReference>
<dbReference type="InterPro" id="IPR053540">
    <property type="entry name" value="BABR_hydratase"/>
</dbReference>
<dbReference type="InterPro" id="IPR017823">
    <property type="entry name" value="CruF"/>
</dbReference>
<dbReference type="InterPro" id="IPR007354">
    <property type="entry name" value="CruF-like"/>
</dbReference>
<dbReference type="NCBIfam" id="TIGR03460">
    <property type="entry name" value="crt_membr_arch"/>
    <property type="match status" value="1"/>
</dbReference>
<dbReference type="NCBIfam" id="NF041333">
    <property type="entry name" value="CruF_Halo"/>
    <property type="match status" value="1"/>
</dbReference>
<dbReference type="PANTHER" id="PTHR39419">
    <property type="entry name" value="SLL0814 PROTEIN"/>
    <property type="match status" value="1"/>
</dbReference>
<dbReference type="PANTHER" id="PTHR39419:SF1">
    <property type="entry name" value="SLL0814 PROTEIN"/>
    <property type="match status" value="1"/>
</dbReference>
<dbReference type="Pfam" id="PF04240">
    <property type="entry name" value="Caroten_synth"/>
    <property type="match status" value="1"/>
</dbReference>
<comment type="function">
    <text evidence="2">Involved in the biosynthesis of the acyclic C50 carotenoid bacterioruberin (BR). Catalyzes the reaction that introduces hydroxyl groups to C3'' and C3''' of bisanhydrobacterioruberin (BABR) to generate BR.</text>
</comment>
<comment type="catalytic activity">
    <reaction evidence="2">
        <text>bacterioruberin = bisanhydrobacterioruberin + 2 H2O</text>
        <dbReference type="Rhea" id="RHEA:38375"/>
        <dbReference type="ChEBI" id="CHEBI:15377"/>
        <dbReference type="ChEBI" id="CHEBI:49388"/>
        <dbReference type="ChEBI" id="CHEBI:87121"/>
        <dbReference type="EC" id="4.2.1.161"/>
    </reaction>
</comment>
<comment type="pathway">
    <text evidence="5">Carotenoid biosynthesis.</text>
</comment>
<comment type="subcellular location">
    <subcellularLocation>
        <location evidence="1">Membrane</location>
        <topology evidence="1">Multi-pass membrane protein</topology>
    </subcellularLocation>
</comment>
<comment type="disruption phenotype">
    <text evidence="2">Cells lacking this gene accumulate BABR.</text>
</comment>
<comment type="similarity">
    <text evidence="4">Belongs to the BABR hydratase family.</text>
</comment>
<sequence>MGSGKDRTLAGWTLPETKTDATAQFDRFVTENRFTIAVVFPLVGAVTLLASAEGLLPDPLAFNPYFVLFGTFVMRLPLVAGIFPLVDRRAGLALVALTLYSYGIELVGVRTGWPYGEFTYGVDLGPMLLGDVPFGLPVFFFPLVLNAYLLVLLLLGNRAASTTVRLLSTLATVMLVDLVLDPGAVAIGFWIYEMPQFYGVPWQNYAGWLLSGSVAVLLFDFGFDRAGLRRRLRDCPFMLDDLVSFVLLWGGINLFYTNWVPFGLAALLGAGLLWTDRFDFDLSETRLGRAVWR</sequence>
<reference key="1">
    <citation type="journal article" date="2015" name="J. Bacteriol.">
        <title>Complete biosynthetic pathway of the C50 carotenoid bacterioruberin from lycopene in the extremely halophilic archaeon Haloarcula japonica.</title>
        <authorList>
            <person name="Yang Y."/>
            <person name="Yatsunami R."/>
            <person name="Ando A."/>
            <person name="Miyoko N."/>
            <person name="Fukui T."/>
            <person name="Takaichi S."/>
            <person name="Nakamura S."/>
        </authorList>
    </citation>
    <scope>NUCLEOTIDE SEQUENCE [GENOMIC DNA]</scope>
    <scope>FUNCTION</scope>
    <scope>CATALYTIC ACTIVITY</scope>
    <scope>DISRUPTION PHENOTYPE</scope>
    <source>
        <strain>ATCC 49778 / DSM 6131 / JCM 7785 / NBRC 101032 / NCIMB 13157 / TR-1</strain>
    </source>
</reference>
<reference key="2">
    <citation type="journal article" date="2014" name="PLoS Genet.">
        <title>Phylogenetically driven sequencing of extremely halophilic archaea reveals strategies for static and dynamic osmo-response.</title>
        <authorList>
            <person name="Becker E.A."/>
            <person name="Seitzer P.M."/>
            <person name="Tritt A."/>
            <person name="Larsen D."/>
            <person name="Krusor M."/>
            <person name="Yao A.I."/>
            <person name="Wu D."/>
            <person name="Madern D."/>
            <person name="Eisen J.A."/>
            <person name="Darling A.E."/>
            <person name="Facciotti M.T."/>
        </authorList>
    </citation>
    <scope>NUCLEOTIDE SEQUENCE [LARGE SCALE GENOMIC DNA]</scope>
    <source>
        <strain>ATCC 49778 / DSM 6131 / JCM 7785 / NBRC 101032 / NCIMB 13157 / TR-1</strain>
    </source>
</reference>
<feature type="chain" id="PRO_0000435600" description="Bisanhydrobacterioruberin hydratase">
    <location>
        <begin position="1"/>
        <end position="293"/>
    </location>
</feature>
<feature type="transmembrane region" description="Helical" evidence="1">
    <location>
        <begin position="36"/>
        <end position="56"/>
    </location>
</feature>
<feature type="transmembrane region" description="Helical" evidence="1">
    <location>
        <begin position="66"/>
        <end position="86"/>
    </location>
</feature>
<feature type="transmembrane region" description="Helical" evidence="1">
    <location>
        <begin position="89"/>
        <end position="109"/>
    </location>
</feature>
<feature type="transmembrane region" description="Helical" evidence="1">
    <location>
        <begin position="134"/>
        <end position="154"/>
    </location>
</feature>
<feature type="transmembrane region" description="Helical" evidence="1">
    <location>
        <begin position="171"/>
        <end position="191"/>
    </location>
</feature>
<feature type="transmembrane region" description="Helical" evidence="1">
    <location>
        <begin position="199"/>
        <end position="219"/>
    </location>
</feature>
<feature type="transmembrane region" description="Helical" evidence="1">
    <location>
        <begin position="254"/>
        <end position="274"/>
    </location>
</feature>
<keyword id="KW-0125">Carotenoid biosynthesis</keyword>
<keyword id="KW-0456">Lyase</keyword>
<keyword id="KW-0472">Membrane</keyword>
<keyword id="KW-0812">Transmembrane</keyword>
<keyword id="KW-1133">Transmembrane helix</keyword>
<name>CRUF_HALJT</name>
<evidence type="ECO:0000255" key="1"/>
<evidence type="ECO:0000269" key="2">
    <source>
    </source>
</evidence>
<evidence type="ECO:0000303" key="3">
    <source>
    </source>
</evidence>
<evidence type="ECO:0000305" key="4"/>
<evidence type="ECO:0000305" key="5">
    <source>
    </source>
</evidence>
<evidence type="ECO:0000312" key="6">
    <source>
        <dbReference type="EMBL" id="EMA29703.1"/>
    </source>
</evidence>
<protein>
    <recommendedName>
        <fullName evidence="3">Bisanhydrobacterioruberin hydratase</fullName>
        <ecNumber evidence="2">4.2.1.161</ecNumber>
    </recommendedName>
</protein>